<organism evidence="5">
    <name type="scientific">Drosophila melanogaster</name>
    <name type="common">Fruit fly</name>
    <dbReference type="NCBI Taxonomy" id="7227"/>
    <lineage>
        <taxon>Eukaryota</taxon>
        <taxon>Metazoa</taxon>
        <taxon>Ecdysozoa</taxon>
        <taxon>Arthropoda</taxon>
        <taxon>Hexapoda</taxon>
        <taxon>Insecta</taxon>
        <taxon>Pterygota</taxon>
        <taxon>Neoptera</taxon>
        <taxon>Endopterygota</taxon>
        <taxon>Diptera</taxon>
        <taxon>Brachycera</taxon>
        <taxon>Muscomorpha</taxon>
        <taxon>Ephydroidea</taxon>
        <taxon>Drosophilidae</taxon>
        <taxon>Drosophila</taxon>
        <taxon>Sophophora</taxon>
    </lineage>
</organism>
<comment type="function">
    <text evidence="1">Regulatory subunit of the GMPPA-GMPPB mannose-1-phosphate guanylyltransferase complex; reduces the catalytic activity of GMPPB when part of the complex. Mediates allosteric feedback inhibition of GMPPB catalytic activity upon binding GDP-alpha-D-mannose. Together with GMPPB regulates GDP-alpha-D-mannose levels.</text>
</comment>
<comment type="subunit">
    <text evidence="1">Component of the GMPPA-GMPPB mannose-1-phosphate guanylyltransferase complex composed of 4 GMPPA subunits and 8 GMPPB subunits; the complex is organized into three layers, a central layer made up of 2 GMPPA dimers sandwiched between two layers each made up of 2 GMPPB dimers.</text>
</comment>
<comment type="interaction">
    <interactant intactId="EBI-101652">
        <id>Q8SXU3</id>
    </interactant>
    <interactant intactId="EBI-165604">
        <id>Q7JZB4</id>
        <label>Gmppb</label>
    </interactant>
    <organismsDiffer>false</organismsDiffer>
    <experiments>7</experiments>
</comment>
<comment type="domain">
    <text evidence="1">The N-terminal substrate-binding domain adopts a Rossman-like fold and has a binding pocket for GTP or GDP-alpha-D-mannose.</text>
</comment>
<comment type="domain">
    <text evidence="1">The C-terminal domain consists of a series of tandem hexapeptide repeats that adopt a beta-helix conformation. The beta-helix forms several protein interaction surfaces involved in assembly of the GMPPA-GMPPB mannose-1-phosphate guanylyltransferase complex. A loop extending from the C-terminal domain (C-loop) is involved in interaction with other subunits of the GMPPA-GMPPB complex and may be involved in allosteric inhibition of GMPPB catalytic activity by GMPPA.</text>
</comment>
<comment type="similarity">
    <text evidence="2">Belongs to the transferase hexapeptide repeat family.</text>
</comment>
<reference evidence="5" key="1">
    <citation type="journal article" date="2000" name="Science">
        <title>The genome sequence of Drosophila melanogaster.</title>
        <authorList>
            <person name="Adams M.D."/>
            <person name="Celniker S.E."/>
            <person name="Holt R.A."/>
            <person name="Evans C.A."/>
            <person name="Gocayne J.D."/>
            <person name="Amanatides P.G."/>
            <person name="Scherer S.E."/>
            <person name="Li P.W."/>
            <person name="Hoskins R.A."/>
            <person name="Galle R.F."/>
            <person name="George R.A."/>
            <person name="Lewis S.E."/>
            <person name="Richards S."/>
            <person name="Ashburner M."/>
            <person name="Henderson S.N."/>
            <person name="Sutton G.G."/>
            <person name="Wortman J.R."/>
            <person name="Yandell M.D."/>
            <person name="Zhang Q."/>
            <person name="Chen L.X."/>
            <person name="Brandon R.C."/>
            <person name="Rogers Y.-H.C."/>
            <person name="Blazej R.G."/>
            <person name="Champe M."/>
            <person name="Pfeiffer B.D."/>
            <person name="Wan K.H."/>
            <person name="Doyle C."/>
            <person name="Baxter E.G."/>
            <person name="Helt G."/>
            <person name="Nelson C.R."/>
            <person name="Miklos G.L.G."/>
            <person name="Abril J.F."/>
            <person name="Agbayani A."/>
            <person name="An H.-J."/>
            <person name="Andrews-Pfannkoch C."/>
            <person name="Baldwin D."/>
            <person name="Ballew R.M."/>
            <person name="Basu A."/>
            <person name="Baxendale J."/>
            <person name="Bayraktaroglu L."/>
            <person name="Beasley E.M."/>
            <person name="Beeson K.Y."/>
            <person name="Benos P.V."/>
            <person name="Berman B.P."/>
            <person name="Bhandari D."/>
            <person name="Bolshakov S."/>
            <person name="Borkova D."/>
            <person name="Botchan M.R."/>
            <person name="Bouck J."/>
            <person name="Brokstein P."/>
            <person name="Brottier P."/>
            <person name="Burtis K.C."/>
            <person name="Busam D.A."/>
            <person name="Butler H."/>
            <person name="Cadieu E."/>
            <person name="Center A."/>
            <person name="Chandra I."/>
            <person name="Cherry J.M."/>
            <person name="Cawley S."/>
            <person name="Dahlke C."/>
            <person name="Davenport L.B."/>
            <person name="Davies P."/>
            <person name="de Pablos B."/>
            <person name="Delcher A."/>
            <person name="Deng Z."/>
            <person name="Mays A.D."/>
            <person name="Dew I."/>
            <person name="Dietz S.M."/>
            <person name="Dodson K."/>
            <person name="Doup L.E."/>
            <person name="Downes M."/>
            <person name="Dugan-Rocha S."/>
            <person name="Dunkov B.C."/>
            <person name="Dunn P."/>
            <person name="Durbin K.J."/>
            <person name="Evangelista C.C."/>
            <person name="Ferraz C."/>
            <person name="Ferriera S."/>
            <person name="Fleischmann W."/>
            <person name="Fosler C."/>
            <person name="Gabrielian A.E."/>
            <person name="Garg N.S."/>
            <person name="Gelbart W.M."/>
            <person name="Glasser K."/>
            <person name="Glodek A."/>
            <person name="Gong F."/>
            <person name="Gorrell J.H."/>
            <person name="Gu Z."/>
            <person name="Guan P."/>
            <person name="Harris M."/>
            <person name="Harris N.L."/>
            <person name="Harvey D.A."/>
            <person name="Heiman T.J."/>
            <person name="Hernandez J.R."/>
            <person name="Houck J."/>
            <person name="Hostin D."/>
            <person name="Houston K.A."/>
            <person name="Howland T.J."/>
            <person name="Wei M.-H."/>
            <person name="Ibegwam C."/>
            <person name="Jalali M."/>
            <person name="Kalush F."/>
            <person name="Karpen G.H."/>
            <person name="Ke Z."/>
            <person name="Kennison J.A."/>
            <person name="Ketchum K.A."/>
            <person name="Kimmel B.E."/>
            <person name="Kodira C.D."/>
            <person name="Kraft C.L."/>
            <person name="Kravitz S."/>
            <person name="Kulp D."/>
            <person name="Lai Z."/>
            <person name="Lasko P."/>
            <person name="Lei Y."/>
            <person name="Levitsky A.A."/>
            <person name="Li J.H."/>
            <person name="Li Z."/>
            <person name="Liang Y."/>
            <person name="Lin X."/>
            <person name="Liu X."/>
            <person name="Mattei B."/>
            <person name="McIntosh T.C."/>
            <person name="McLeod M.P."/>
            <person name="McPherson D."/>
            <person name="Merkulov G."/>
            <person name="Milshina N.V."/>
            <person name="Mobarry C."/>
            <person name="Morris J."/>
            <person name="Moshrefi A."/>
            <person name="Mount S.M."/>
            <person name="Moy M."/>
            <person name="Murphy B."/>
            <person name="Murphy L."/>
            <person name="Muzny D.M."/>
            <person name="Nelson D.L."/>
            <person name="Nelson D.R."/>
            <person name="Nelson K.A."/>
            <person name="Nixon K."/>
            <person name="Nusskern D.R."/>
            <person name="Pacleb J.M."/>
            <person name="Palazzolo M."/>
            <person name="Pittman G.S."/>
            <person name="Pan S."/>
            <person name="Pollard J."/>
            <person name="Puri V."/>
            <person name="Reese M.G."/>
            <person name="Reinert K."/>
            <person name="Remington K."/>
            <person name="Saunders R.D.C."/>
            <person name="Scheeler F."/>
            <person name="Shen H."/>
            <person name="Shue B.C."/>
            <person name="Siden-Kiamos I."/>
            <person name="Simpson M."/>
            <person name="Skupski M.P."/>
            <person name="Smith T.J."/>
            <person name="Spier E."/>
            <person name="Spradling A.C."/>
            <person name="Stapleton M."/>
            <person name="Strong R."/>
            <person name="Sun E."/>
            <person name="Svirskas R."/>
            <person name="Tector C."/>
            <person name="Turner R."/>
            <person name="Venter E."/>
            <person name="Wang A.H."/>
            <person name="Wang X."/>
            <person name="Wang Z.-Y."/>
            <person name="Wassarman D.A."/>
            <person name="Weinstock G.M."/>
            <person name="Weissenbach J."/>
            <person name="Williams S.M."/>
            <person name="Woodage T."/>
            <person name="Worley K.C."/>
            <person name="Wu D."/>
            <person name="Yang S."/>
            <person name="Yao Q.A."/>
            <person name="Ye J."/>
            <person name="Yeh R.-F."/>
            <person name="Zaveri J.S."/>
            <person name="Zhan M."/>
            <person name="Zhang G."/>
            <person name="Zhao Q."/>
            <person name="Zheng L."/>
            <person name="Zheng X.H."/>
            <person name="Zhong F.N."/>
            <person name="Zhong W."/>
            <person name="Zhou X."/>
            <person name="Zhu S.C."/>
            <person name="Zhu X."/>
            <person name="Smith H.O."/>
            <person name="Gibbs R.A."/>
            <person name="Myers E.W."/>
            <person name="Rubin G.M."/>
            <person name="Venter J.C."/>
        </authorList>
    </citation>
    <scope>NUCLEOTIDE SEQUENCE [LARGE SCALE GENOMIC DNA]</scope>
    <source>
        <strain evidence="5">Berkeley</strain>
    </source>
</reference>
<reference evidence="5" key="2">
    <citation type="journal article" date="2002" name="Genome Biol.">
        <title>Annotation of the Drosophila melanogaster euchromatic genome: a systematic review.</title>
        <authorList>
            <person name="Misra S."/>
            <person name="Crosby M.A."/>
            <person name="Mungall C.J."/>
            <person name="Matthews B.B."/>
            <person name="Campbell K.S."/>
            <person name="Hradecky P."/>
            <person name="Huang Y."/>
            <person name="Kaminker J.S."/>
            <person name="Millburn G.H."/>
            <person name="Prochnik S.E."/>
            <person name="Smith C.D."/>
            <person name="Tupy J.L."/>
            <person name="Whitfield E.J."/>
            <person name="Bayraktaroglu L."/>
            <person name="Berman B.P."/>
            <person name="Bettencourt B.R."/>
            <person name="Celniker S.E."/>
            <person name="de Grey A.D.N.J."/>
            <person name="Drysdale R.A."/>
            <person name="Harris N.L."/>
            <person name="Richter J."/>
            <person name="Russo S."/>
            <person name="Schroeder A.J."/>
            <person name="Shu S.Q."/>
            <person name="Stapleton M."/>
            <person name="Yamada C."/>
            <person name="Ashburner M."/>
            <person name="Gelbart W.M."/>
            <person name="Rubin G.M."/>
            <person name="Lewis S.E."/>
        </authorList>
    </citation>
    <scope>GENOME REANNOTATION</scope>
    <source>
        <strain evidence="5">Berkeley</strain>
    </source>
</reference>
<reference evidence="3" key="3">
    <citation type="journal article" date="2002" name="Genome Biol.">
        <title>A Drosophila full-length cDNA resource.</title>
        <authorList>
            <person name="Stapleton M."/>
            <person name="Carlson J.W."/>
            <person name="Brokstein P."/>
            <person name="Yu C."/>
            <person name="Champe M."/>
            <person name="George R.A."/>
            <person name="Guarin H."/>
            <person name="Kronmiller B."/>
            <person name="Pacleb J.M."/>
            <person name="Park S."/>
            <person name="Wan K.H."/>
            <person name="Rubin G.M."/>
            <person name="Celniker S.E."/>
        </authorList>
    </citation>
    <scope>NUCLEOTIDE SEQUENCE [LARGE SCALE MRNA]</scope>
    <source>
        <strain evidence="3">Berkeley</strain>
        <tissue evidence="3">Embryo</tissue>
    </source>
</reference>
<proteinExistence type="evidence at protein level"/>
<dbReference type="EMBL" id="AE013599">
    <property type="protein sequence ID" value="AAF58116.2"/>
    <property type="molecule type" value="Genomic_DNA"/>
</dbReference>
<dbReference type="EMBL" id="AY084132">
    <property type="protein sequence ID" value="AAL89870.1"/>
    <property type="molecule type" value="mRNA"/>
</dbReference>
<dbReference type="RefSeq" id="NP_611051.2">
    <property type="nucleotide sequence ID" value="NM_137207.4"/>
</dbReference>
<dbReference type="SMR" id="Q8SXU3"/>
<dbReference type="FunCoup" id="Q8SXU3">
    <property type="interactions" value="647"/>
</dbReference>
<dbReference type="IntAct" id="Q8SXU3">
    <property type="interactions" value="7"/>
</dbReference>
<dbReference type="STRING" id="7227.FBpp0086475"/>
<dbReference type="PaxDb" id="7227-FBpp0086475"/>
<dbReference type="DNASU" id="36730"/>
<dbReference type="EnsemblMetazoa" id="FBtr0087342">
    <property type="protein sequence ID" value="FBpp0086475"/>
    <property type="gene ID" value="FBgn0034035"/>
</dbReference>
<dbReference type="GeneID" id="36730"/>
<dbReference type="KEGG" id="dme:Dmel_CG8207"/>
<dbReference type="UCSC" id="CG8207-RA">
    <property type="organism name" value="d. melanogaster"/>
</dbReference>
<dbReference type="AGR" id="FB:FBgn0034035"/>
<dbReference type="CTD" id="29926"/>
<dbReference type="FlyBase" id="FBgn0034035">
    <property type="gene designation" value="Gmppa"/>
</dbReference>
<dbReference type="VEuPathDB" id="VectorBase:FBgn0034035"/>
<dbReference type="eggNOG" id="KOG1460">
    <property type="taxonomic scope" value="Eukaryota"/>
</dbReference>
<dbReference type="GeneTree" id="ENSGT00940000157018"/>
<dbReference type="HOGENOM" id="CLU_029499_3_0_1"/>
<dbReference type="InParanoid" id="Q8SXU3"/>
<dbReference type="OMA" id="MPVPNWW"/>
<dbReference type="OrthoDB" id="285674at2759"/>
<dbReference type="Reactome" id="R-DME-446205">
    <property type="pathway name" value="Synthesis of GDP-mannose"/>
</dbReference>
<dbReference type="BioGRID-ORCS" id="36730">
    <property type="hits" value="0 hits in 1 CRISPR screen"/>
</dbReference>
<dbReference type="ChiTaRS" id="CG8207">
    <property type="organism name" value="fly"/>
</dbReference>
<dbReference type="GenomeRNAi" id="36730"/>
<dbReference type="PRO" id="PR:Q8SXU3"/>
<dbReference type="Proteomes" id="UP000000803">
    <property type="component" value="Chromosome 2R"/>
</dbReference>
<dbReference type="Bgee" id="FBgn0034035">
    <property type="expression patterns" value="Expressed in embryonic/larval hemocyte (Drosophila) and 55 other cell types or tissues"/>
</dbReference>
<dbReference type="GO" id="GO:0005737">
    <property type="term" value="C:cytoplasm"/>
    <property type="evidence" value="ECO:0000318"/>
    <property type="project" value="GO_Central"/>
</dbReference>
<dbReference type="GO" id="GO:0120508">
    <property type="term" value="C:GDP-mannose pyrophosphorylase complex"/>
    <property type="evidence" value="ECO:0000250"/>
    <property type="project" value="FlyBase"/>
</dbReference>
<dbReference type="GO" id="GO:0004857">
    <property type="term" value="F:enzyme inhibitor activity"/>
    <property type="evidence" value="ECO:0000250"/>
    <property type="project" value="FlyBase"/>
</dbReference>
<dbReference type="GO" id="GO:0140299">
    <property type="term" value="F:molecular sensor activity"/>
    <property type="evidence" value="ECO:0000250"/>
    <property type="project" value="FlyBase"/>
</dbReference>
<dbReference type="GO" id="GO:0009058">
    <property type="term" value="P:biosynthetic process"/>
    <property type="evidence" value="ECO:0007669"/>
    <property type="project" value="InterPro"/>
</dbReference>
<dbReference type="GO" id="GO:0019673">
    <property type="term" value="P:GDP-mannose metabolic process"/>
    <property type="evidence" value="ECO:0000250"/>
    <property type="project" value="FlyBase"/>
</dbReference>
<dbReference type="CDD" id="cd06428">
    <property type="entry name" value="M1P_guanylylT_A_like_N"/>
    <property type="match status" value="1"/>
</dbReference>
<dbReference type="Gene3D" id="2.160.10.10">
    <property type="entry name" value="Hexapeptide repeat proteins"/>
    <property type="match status" value="1"/>
</dbReference>
<dbReference type="Gene3D" id="3.90.550.10">
    <property type="entry name" value="Spore Coat Polysaccharide Biosynthesis Protein SpsA, Chain A"/>
    <property type="match status" value="1"/>
</dbReference>
<dbReference type="InterPro" id="IPR056729">
    <property type="entry name" value="GMPPB_C"/>
</dbReference>
<dbReference type="InterPro" id="IPR050486">
    <property type="entry name" value="Mannose-1P_guanyltransferase"/>
</dbReference>
<dbReference type="InterPro" id="IPR005835">
    <property type="entry name" value="NTP_transferase_dom"/>
</dbReference>
<dbReference type="InterPro" id="IPR029044">
    <property type="entry name" value="Nucleotide-diphossugar_trans"/>
</dbReference>
<dbReference type="PANTHER" id="PTHR22572">
    <property type="entry name" value="SUGAR-1-PHOSPHATE GUANYL TRANSFERASE"/>
    <property type="match status" value="1"/>
</dbReference>
<dbReference type="Pfam" id="PF25087">
    <property type="entry name" value="GMPPB_C"/>
    <property type="match status" value="1"/>
</dbReference>
<dbReference type="Pfam" id="PF00483">
    <property type="entry name" value="NTP_transferase"/>
    <property type="match status" value="1"/>
</dbReference>
<dbReference type="SUPFAM" id="SSF53448">
    <property type="entry name" value="Nucleotide-diphospho-sugar transferases"/>
    <property type="match status" value="1"/>
</dbReference>
<keyword id="KW-1185">Reference proteome</keyword>
<sequence>MLKAVILIGGPQKGTRFRPLSLDTPKPLFPLAGRPLIAHHIEACAQLPDIREILIIGYYPQTQMEGFVGDMQALYSSSNINIRYLQEFTALGTAGGMYHFRDQIRAGNPRAFFVLNGDVCADFPLQELCDFHEKRPASALVTIMSTEATRQQSLHYGCLVFDRSSGAVSHYVEKPSSYVSTFINCGVYVCSMDIFTVLAQIFHSRGQEYSCQAFCNGNGNGNGREQGHIKWEQEVLTPLAGTDKLFAMPVPNWWSQLKTAGSAIYANRHYLGLYKKTHPERLANVGIKRGEGDGSLICTVHPDVYVHPSATVHHSAVLGPNVAIGPGVTIGPGVRIRESIVLEQAQILDHTLVLHSIVGRGSTIGAWARVEGTPSDPDPNKPFAKMENPPLFNNEGKLNPSITILGCFVQVPAEKILLNSIVLPHKELSRSFKNEIIL</sequence>
<protein>
    <recommendedName>
        <fullName evidence="2">Mannose-1-phosphate guanylyltransferase regulatory subunit alpha</fullName>
    </recommendedName>
    <alternativeName>
        <fullName evidence="4">GDP-mannose pyrophosphorylase A</fullName>
    </alternativeName>
</protein>
<name>GMPPA_DROME</name>
<feature type="chain" id="PRO_0000460968" description="Mannose-1-phosphate guanylyltransferase regulatory subunit alpha">
    <location>
        <begin position="1"/>
        <end position="438"/>
    </location>
</feature>
<feature type="region of interest" description="Substrate-binding domain" evidence="1">
    <location>
        <begin position="2"/>
        <end position="260"/>
    </location>
</feature>
<feature type="region of interest" description="Hexapeptide repeat domain" evidence="1">
    <location>
        <begin position="282"/>
        <end position="438"/>
    </location>
</feature>
<feature type="region of interest" description="C-loop" evidence="1">
    <location>
        <begin position="373"/>
        <end position="402"/>
    </location>
</feature>
<feature type="binding site" evidence="1">
    <location>
        <position position="87"/>
    </location>
    <ligand>
        <name>GDP-alpha-D-mannose</name>
        <dbReference type="ChEBI" id="CHEBI:57527"/>
    </ligand>
</feature>
<feature type="binding site" evidence="1">
    <location>
        <position position="256"/>
    </location>
    <ligand>
        <name>GDP-alpha-D-mannose</name>
        <dbReference type="ChEBI" id="CHEBI:57527"/>
    </ligand>
</feature>
<gene>
    <name evidence="4" type="primary">Gmppa</name>
    <name evidence="4" type="ORF">CG8207</name>
</gene>
<accession>Q8SXU3</accession>
<accession>Q9V7E1</accession>
<evidence type="ECO:0000250" key="1">
    <source>
        <dbReference type="UniProtKB" id="Q96IJ6"/>
    </source>
</evidence>
<evidence type="ECO:0000305" key="2"/>
<evidence type="ECO:0000312" key="3">
    <source>
        <dbReference type="EMBL" id="AAL89870.1"/>
    </source>
</evidence>
<evidence type="ECO:0000312" key="4">
    <source>
        <dbReference type="FlyBase" id="FBgn0034035"/>
    </source>
</evidence>
<evidence type="ECO:0000312" key="5">
    <source>
        <dbReference type="Proteomes" id="UP000000803"/>
    </source>
</evidence>